<accession>A3DP93</accession>
<protein>
    <recommendedName>
        <fullName evidence="1">tRNA(Ile2) 2-agmatinylcytidine synthetase TiaS</fullName>
        <shortName evidence="1">tRNA(Ile2)-agm2C synthetase</shortName>
        <ecNumber evidence="1">6.3.4.22</ecNumber>
    </recommendedName>
    <alternativeName>
        <fullName evidence="1">tRNA(Ile2) agmatidine synthetase</fullName>
    </alternativeName>
</protein>
<gene>
    <name evidence="1" type="primary">tiaS</name>
    <name type="ordered locus">Smar_1362</name>
</gene>
<proteinExistence type="inferred from homology"/>
<organism>
    <name type="scientific">Staphylothermus marinus (strain ATCC 43588 / DSM 3639 / JCM 9404 / F1)</name>
    <dbReference type="NCBI Taxonomy" id="399550"/>
    <lineage>
        <taxon>Archaea</taxon>
        <taxon>Thermoproteota</taxon>
        <taxon>Thermoprotei</taxon>
        <taxon>Desulfurococcales</taxon>
        <taxon>Desulfurococcaceae</taxon>
        <taxon>Staphylothermus</taxon>
    </lineage>
</organism>
<keyword id="KW-0067">ATP-binding</keyword>
<keyword id="KW-0963">Cytoplasm</keyword>
<keyword id="KW-0436">Ligase</keyword>
<keyword id="KW-0547">Nucleotide-binding</keyword>
<keyword id="KW-1185">Reference proteome</keyword>
<keyword id="KW-0819">tRNA processing</keyword>
<comment type="function">
    <text evidence="1">ATP-dependent agmatine transferase that catalyzes the formation of 2-agmatinylcytidine (agm2C) at the wobble position (C34) of tRNA(Ile2), converting the codon specificity from AUG to AUA.</text>
</comment>
<comment type="catalytic activity">
    <reaction evidence="1">
        <text>cytidine(34) in tRNA(Ile2) + agmatine + ATP + H2O = 2-agmatinylcytidine(34) in tRNA(Ile2) + AMP + 2 phosphate + 2 H(+)</text>
        <dbReference type="Rhea" id="RHEA:43608"/>
        <dbReference type="Rhea" id="RHEA-COMP:10625"/>
        <dbReference type="Rhea" id="RHEA-COMP:10626"/>
        <dbReference type="ChEBI" id="CHEBI:15377"/>
        <dbReference type="ChEBI" id="CHEBI:15378"/>
        <dbReference type="ChEBI" id="CHEBI:30616"/>
        <dbReference type="ChEBI" id="CHEBI:43474"/>
        <dbReference type="ChEBI" id="CHEBI:58145"/>
        <dbReference type="ChEBI" id="CHEBI:82748"/>
        <dbReference type="ChEBI" id="CHEBI:83545"/>
        <dbReference type="ChEBI" id="CHEBI:456215"/>
        <dbReference type="EC" id="6.3.4.22"/>
    </reaction>
</comment>
<comment type="subcellular location">
    <subcellularLocation>
        <location evidence="1">Cytoplasm</location>
    </subcellularLocation>
</comment>
<comment type="similarity">
    <text evidence="1">Belongs to the TiaS family.</text>
</comment>
<evidence type="ECO:0000255" key="1">
    <source>
        <dbReference type="HAMAP-Rule" id="MF_01892"/>
    </source>
</evidence>
<name>TIAS_STAMF</name>
<sequence>MKETIVHMGFDDIDTPFGGCTTHFVASILVKWVKDRRIKLIDYPNLIRLNPGVPWKTRGNGAVVLRFKVKNYDEAIKLLEEAYDEALEYLGKYHHPQHHPVIGMYIGGLSERIKWIGWKAVHDLIPLDLMHRVLEKEKNKIIYKLLRKDKKRGLIGVFSAIGYRMTNTDYTYELIAYRSEEYIDKPRQVNAESVKYMDKVFHNDTILNYDYETNRPLITPHGGDPVLLGIRGEYPDVLIKAYNMVKINEPVPIRLIYRTNQHTDAHLRRINNLGEAFIYRGVRVRVWVASIPKRIMGGHVIFKVTDGRRFIDVAAYEPTGKLRRIAEKLRPGDEVEVMGIVRPQSSKHGPTINLEKLHIIMVKPLIKLENPRCPRCGARMKSAGRGKGYKCPKCGYRDPNAKKIVRVIKRDLEPGWYEPSPRAFKHLMKPLKRFGKEKNHYPEEIEPSNFIWYNNMLLK</sequence>
<feature type="chain" id="PRO_0000407301" description="tRNA(Ile2) 2-agmatinylcytidine synthetase TiaS">
    <location>
        <begin position="1"/>
        <end position="459"/>
    </location>
</feature>
<feature type="DNA-binding region" description="OB" evidence="1">
    <location>
        <begin position="282"/>
        <end position="360"/>
    </location>
</feature>
<dbReference type="EC" id="6.3.4.22" evidence="1"/>
<dbReference type="EMBL" id="CP000575">
    <property type="protein sequence ID" value="ABN70453.1"/>
    <property type="molecule type" value="Genomic_DNA"/>
</dbReference>
<dbReference type="SMR" id="A3DP93"/>
<dbReference type="STRING" id="399550.Smar_1362"/>
<dbReference type="KEGG" id="smr:Smar_1362"/>
<dbReference type="eggNOG" id="arCOG01115">
    <property type="taxonomic scope" value="Archaea"/>
</dbReference>
<dbReference type="HOGENOM" id="CLU_675459_0_0_2"/>
<dbReference type="OrthoDB" id="39189at2157"/>
<dbReference type="Proteomes" id="UP000000254">
    <property type="component" value="Chromosome"/>
</dbReference>
<dbReference type="GO" id="GO:0005737">
    <property type="term" value="C:cytoplasm"/>
    <property type="evidence" value="ECO:0007669"/>
    <property type="project" value="UniProtKB-SubCell"/>
</dbReference>
<dbReference type="GO" id="GO:0005524">
    <property type="term" value="F:ATP binding"/>
    <property type="evidence" value="ECO:0007669"/>
    <property type="project" value="UniProtKB-KW"/>
</dbReference>
<dbReference type="GO" id="GO:0016879">
    <property type="term" value="F:ligase activity, forming carbon-nitrogen bonds"/>
    <property type="evidence" value="ECO:0007669"/>
    <property type="project" value="UniProtKB-UniRule"/>
</dbReference>
<dbReference type="GO" id="GO:0003676">
    <property type="term" value="F:nucleic acid binding"/>
    <property type="evidence" value="ECO:0007669"/>
    <property type="project" value="InterPro"/>
</dbReference>
<dbReference type="GO" id="GO:0002101">
    <property type="term" value="P:tRNA wobble cytosine modification"/>
    <property type="evidence" value="ECO:0007669"/>
    <property type="project" value="UniProtKB-UniRule"/>
</dbReference>
<dbReference type="CDD" id="cd04482">
    <property type="entry name" value="RPA2_OBF_like"/>
    <property type="match status" value="1"/>
</dbReference>
<dbReference type="Gene3D" id="2.40.50.1010">
    <property type="match status" value="1"/>
</dbReference>
<dbReference type="Gene3D" id="3.30.70.2200">
    <property type="match status" value="1"/>
</dbReference>
<dbReference type="Gene3D" id="3.90.600.20">
    <property type="match status" value="1"/>
</dbReference>
<dbReference type="HAMAP" id="MF_01892">
    <property type="entry name" value="tRNA_Ile2_agm2C_synt"/>
    <property type="match status" value="1"/>
</dbReference>
<dbReference type="InterPro" id="IPR004365">
    <property type="entry name" value="NA-bd_OB_tRNA"/>
</dbReference>
<dbReference type="InterPro" id="IPR053870">
    <property type="entry name" value="TiaS-like_TCKD"/>
</dbReference>
<dbReference type="InterPro" id="IPR013696">
    <property type="entry name" value="TiaS_FLD"/>
</dbReference>
<dbReference type="InterPro" id="IPR024913">
    <property type="entry name" value="tRNA_Ile2__agm2C_synt"/>
</dbReference>
<dbReference type="InterPro" id="IPR055394">
    <property type="entry name" value="Zn_ribbon_TiaS"/>
</dbReference>
<dbReference type="PANTHER" id="PTHR40705:SF2">
    <property type="entry name" value="DUF1743 DOMAIN-CONTAINING PROTEIN"/>
    <property type="match status" value="1"/>
</dbReference>
<dbReference type="PANTHER" id="PTHR40705">
    <property type="entry name" value="TRNA(ILE2) 2-AGMATINYLCYTIDINE SYNTHETASE TIAS"/>
    <property type="match status" value="1"/>
</dbReference>
<dbReference type="Pfam" id="PF08489">
    <property type="entry name" value="TiaS_FLD"/>
    <property type="match status" value="1"/>
</dbReference>
<dbReference type="Pfam" id="PF22641">
    <property type="entry name" value="TiaS_TCKD"/>
    <property type="match status" value="1"/>
</dbReference>
<dbReference type="Pfam" id="PF01336">
    <property type="entry name" value="tRNA_anti-codon"/>
    <property type="match status" value="1"/>
</dbReference>
<dbReference type="Pfam" id="PF23783">
    <property type="entry name" value="Zn_ribbon_TiaS"/>
    <property type="match status" value="1"/>
</dbReference>
<reference key="1">
    <citation type="journal article" date="2009" name="Stand. Genomic Sci.">
        <title>Complete genome sequence of Staphylothermus marinus Stetter and Fiala 1986 type strain F1.</title>
        <authorList>
            <person name="Anderson I.J."/>
            <person name="Sun H."/>
            <person name="Lapidus A."/>
            <person name="Copeland A."/>
            <person name="Glavina Del Rio T."/>
            <person name="Tice H."/>
            <person name="Dalin E."/>
            <person name="Lucas S."/>
            <person name="Barry K."/>
            <person name="Land M."/>
            <person name="Richardson P."/>
            <person name="Huber H."/>
            <person name="Kyrpides N.C."/>
        </authorList>
    </citation>
    <scope>NUCLEOTIDE SEQUENCE [LARGE SCALE GENOMIC DNA]</scope>
    <source>
        <strain>ATCC 43588 / DSM 3639 / JCM 9404 / F1</strain>
    </source>
</reference>
<reference key="2">
    <citation type="journal article" date="2009" name="BMC Genomics">
        <title>The complete genome sequence of Staphylothermus marinus reveals differences in sulfur metabolism among heterotrophic Crenarchaeota.</title>
        <authorList>
            <person name="Anderson I.J."/>
            <person name="Dharmarajan L."/>
            <person name="Rodriguez J."/>
            <person name="Hooper S."/>
            <person name="Porat I."/>
            <person name="Ulrich L.E."/>
            <person name="Elkins J.G."/>
            <person name="Mavromatis K."/>
            <person name="Sun H."/>
            <person name="Land M."/>
            <person name="Lapidus A."/>
            <person name="Lucas S."/>
            <person name="Barry K."/>
            <person name="Huber H."/>
            <person name="Zhulin I.B."/>
            <person name="Whitman W.B."/>
            <person name="Mukhopadhyay B."/>
            <person name="Woese C."/>
            <person name="Bristow J."/>
            <person name="Kyrpides N."/>
        </authorList>
    </citation>
    <scope>NUCLEOTIDE SEQUENCE [LARGE SCALE GENOMIC DNA]</scope>
    <source>
        <strain>ATCC 43588 / DSM 3639 / JCM 9404 / F1</strain>
    </source>
</reference>